<comment type="catalytic activity">
    <reaction evidence="1">
        <text>2 reduced [2Fe-2S]-[ferredoxin] + NADP(+) + H(+) = 2 oxidized [2Fe-2S]-[ferredoxin] + NADPH</text>
        <dbReference type="Rhea" id="RHEA:20125"/>
        <dbReference type="Rhea" id="RHEA-COMP:10000"/>
        <dbReference type="Rhea" id="RHEA-COMP:10001"/>
        <dbReference type="ChEBI" id="CHEBI:15378"/>
        <dbReference type="ChEBI" id="CHEBI:33737"/>
        <dbReference type="ChEBI" id="CHEBI:33738"/>
        <dbReference type="ChEBI" id="CHEBI:57783"/>
        <dbReference type="ChEBI" id="CHEBI:58349"/>
        <dbReference type="EC" id="1.18.1.2"/>
    </reaction>
</comment>
<comment type="cofactor">
    <cofactor evidence="1">
        <name>FAD</name>
        <dbReference type="ChEBI" id="CHEBI:57692"/>
    </cofactor>
    <text evidence="1">Binds 1 FAD per subunit.</text>
</comment>
<comment type="subunit">
    <text evidence="1">Homodimer.</text>
</comment>
<comment type="similarity">
    <text evidence="1">Belongs to the ferredoxin--NADP reductase type 2 family.</text>
</comment>
<name>FENR_STAA2</name>
<feature type="chain" id="PRO_0000364936" description="Ferredoxin--NADP reductase">
    <location>
        <begin position="1"/>
        <end position="344"/>
    </location>
</feature>
<feature type="binding site" evidence="1">
    <location>
        <position position="12"/>
    </location>
    <ligand>
        <name>FAD</name>
        <dbReference type="ChEBI" id="CHEBI:57692"/>
    </ligand>
</feature>
<feature type="binding site" evidence="1">
    <location>
        <position position="31"/>
    </location>
    <ligand>
        <name>FAD</name>
        <dbReference type="ChEBI" id="CHEBI:57692"/>
    </ligand>
</feature>
<feature type="binding site" evidence="1">
    <location>
        <position position="39"/>
    </location>
    <ligand>
        <name>FAD</name>
        <dbReference type="ChEBI" id="CHEBI:57692"/>
    </ligand>
</feature>
<feature type="binding site" evidence="1">
    <location>
        <position position="43"/>
    </location>
    <ligand>
        <name>FAD</name>
        <dbReference type="ChEBI" id="CHEBI:57692"/>
    </ligand>
</feature>
<feature type="binding site" evidence="1">
    <location>
        <position position="83"/>
    </location>
    <ligand>
        <name>FAD</name>
        <dbReference type="ChEBI" id="CHEBI:57692"/>
    </ligand>
</feature>
<feature type="binding site" evidence="1">
    <location>
        <position position="118"/>
    </location>
    <ligand>
        <name>FAD</name>
        <dbReference type="ChEBI" id="CHEBI:57692"/>
    </ligand>
</feature>
<feature type="binding site" evidence="1">
    <location>
        <position position="285"/>
    </location>
    <ligand>
        <name>FAD</name>
        <dbReference type="ChEBI" id="CHEBI:57692"/>
    </ligand>
</feature>
<feature type="binding site" evidence="1">
    <location>
        <position position="326"/>
    </location>
    <ligand>
        <name>FAD</name>
        <dbReference type="ChEBI" id="CHEBI:57692"/>
    </ligand>
</feature>
<evidence type="ECO:0000255" key="1">
    <source>
        <dbReference type="HAMAP-Rule" id="MF_01685"/>
    </source>
</evidence>
<dbReference type="EC" id="1.18.1.2" evidence="1"/>
<dbReference type="EMBL" id="CP000736">
    <property type="protein sequence ID" value="ABR53267.1"/>
    <property type="molecule type" value="Genomic_DNA"/>
</dbReference>
<dbReference type="SMR" id="A6U499"/>
<dbReference type="KEGG" id="sah:SaurJH1_2442"/>
<dbReference type="HOGENOM" id="CLU_031864_5_5_9"/>
<dbReference type="GO" id="GO:0004324">
    <property type="term" value="F:ferredoxin-NADP+ reductase activity"/>
    <property type="evidence" value="ECO:0007669"/>
    <property type="project" value="UniProtKB-UniRule"/>
</dbReference>
<dbReference type="GO" id="GO:0050660">
    <property type="term" value="F:flavin adenine dinucleotide binding"/>
    <property type="evidence" value="ECO:0007669"/>
    <property type="project" value="UniProtKB-UniRule"/>
</dbReference>
<dbReference type="GO" id="GO:0050661">
    <property type="term" value="F:NADP binding"/>
    <property type="evidence" value="ECO:0007669"/>
    <property type="project" value="UniProtKB-UniRule"/>
</dbReference>
<dbReference type="Gene3D" id="3.50.50.60">
    <property type="entry name" value="FAD/NAD(P)-binding domain"/>
    <property type="match status" value="2"/>
</dbReference>
<dbReference type="HAMAP" id="MF_01685">
    <property type="entry name" value="FENR2"/>
    <property type="match status" value="1"/>
</dbReference>
<dbReference type="InterPro" id="IPR036188">
    <property type="entry name" value="FAD/NAD-bd_sf"/>
</dbReference>
<dbReference type="InterPro" id="IPR023753">
    <property type="entry name" value="FAD/NAD-binding_dom"/>
</dbReference>
<dbReference type="InterPro" id="IPR022890">
    <property type="entry name" value="Fd--NADP_Rdtase_type_2"/>
</dbReference>
<dbReference type="InterPro" id="IPR050097">
    <property type="entry name" value="Ferredoxin-NADP_redctase_2"/>
</dbReference>
<dbReference type="PANTHER" id="PTHR48105">
    <property type="entry name" value="THIOREDOXIN REDUCTASE 1-RELATED-RELATED"/>
    <property type="match status" value="1"/>
</dbReference>
<dbReference type="Pfam" id="PF07992">
    <property type="entry name" value="Pyr_redox_2"/>
    <property type="match status" value="1"/>
</dbReference>
<dbReference type="PRINTS" id="PR00368">
    <property type="entry name" value="FADPNR"/>
</dbReference>
<dbReference type="PRINTS" id="PR00469">
    <property type="entry name" value="PNDRDTASEII"/>
</dbReference>
<dbReference type="SUPFAM" id="SSF51905">
    <property type="entry name" value="FAD/NAD(P)-binding domain"/>
    <property type="match status" value="1"/>
</dbReference>
<protein>
    <recommendedName>
        <fullName evidence="1">Ferredoxin--NADP reductase</fullName>
        <shortName evidence="1">FNR</shortName>
        <shortName evidence="1">Fd-NADP(+) reductase</shortName>
        <ecNumber evidence="1">1.18.1.2</ecNumber>
    </recommendedName>
</protein>
<proteinExistence type="inferred from homology"/>
<reference key="1">
    <citation type="submission" date="2007-06" db="EMBL/GenBank/DDBJ databases">
        <title>Complete sequence of chromosome of Staphylococcus aureus subsp. aureus JH1.</title>
        <authorList>
            <consortium name="US DOE Joint Genome Institute"/>
            <person name="Copeland A."/>
            <person name="Lucas S."/>
            <person name="Lapidus A."/>
            <person name="Barry K."/>
            <person name="Detter J.C."/>
            <person name="Glavina del Rio T."/>
            <person name="Hammon N."/>
            <person name="Israni S."/>
            <person name="Dalin E."/>
            <person name="Tice H."/>
            <person name="Pitluck S."/>
            <person name="Chain P."/>
            <person name="Malfatti S."/>
            <person name="Shin M."/>
            <person name="Vergez L."/>
            <person name="Schmutz J."/>
            <person name="Larimer F."/>
            <person name="Land M."/>
            <person name="Hauser L."/>
            <person name="Kyrpides N."/>
            <person name="Ivanova N."/>
            <person name="Tomasz A."/>
            <person name="Richardson P."/>
        </authorList>
    </citation>
    <scope>NUCLEOTIDE SEQUENCE [LARGE SCALE GENOMIC DNA]</scope>
    <source>
        <strain>JH1</strain>
    </source>
</reference>
<gene>
    <name type="ordered locus">SaurJH1_2442</name>
</gene>
<accession>A6U499</accession>
<organism>
    <name type="scientific">Staphylococcus aureus (strain JH1)</name>
    <dbReference type="NCBI Taxonomy" id="359787"/>
    <lineage>
        <taxon>Bacteria</taxon>
        <taxon>Bacillati</taxon>
        <taxon>Bacillota</taxon>
        <taxon>Bacilli</taxon>
        <taxon>Bacillales</taxon>
        <taxon>Staphylococcaceae</taxon>
        <taxon>Staphylococcus</taxon>
    </lineage>
</organism>
<sequence>MKDVTIIGGGPSGLYASFYAGLRDMSVRLIDVQSELGGKMRIYPEKIIWDIGGIAPKPCHEILKDTIKQGLYFKPEVHLNERVVDIRKKAERHFEVETEAGEIYTSKAVIIAIGAGIINPKQLDVKGVERYQLTNLHYVVQSYRRFKDKDVLISGGGNTALDWAHDIAKIAKSVTVVYRKEDVSGHEAMKTLVTDLNVKLCPKTRIKYLVGNDDETHISEVVLEHVESGDRHTVKFDDVIISHGFDRCNTLLSETSSKLDMHDDCRVKGFGNTTTSIPGIYACGDIVYHDAKSHLIASAFSDGANAANLAKTYIQPDANAEGYVSSHHEVFKEANKTIVNKHLY</sequence>
<keyword id="KW-0274">FAD</keyword>
<keyword id="KW-0285">Flavoprotein</keyword>
<keyword id="KW-0521">NADP</keyword>
<keyword id="KW-0560">Oxidoreductase</keyword>